<feature type="chain" id="PRO_1000014646" description="Small ribosomal subunit protein bS20">
    <location>
        <begin position="1"/>
        <end position="86"/>
    </location>
</feature>
<feature type="region of interest" description="Disordered" evidence="2">
    <location>
        <begin position="1"/>
        <end position="25"/>
    </location>
</feature>
<keyword id="KW-1185">Reference proteome</keyword>
<keyword id="KW-0687">Ribonucleoprotein</keyword>
<keyword id="KW-0689">Ribosomal protein</keyword>
<keyword id="KW-0694">RNA-binding</keyword>
<keyword id="KW-0699">rRNA-binding</keyword>
<dbReference type="EMBL" id="AM420293">
    <property type="protein sequence ID" value="CAM00761.1"/>
    <property type="molecule type" value="Genomic_DNA"/>
</dbReference>
<dbReference type="RefSeq" id="WP_009947716.1">
    <property type="nucleotide sequence ID" value="NC_009142.1"/>
</dbReference>
<dbReference type="SMR" id="A4F9N6"/>
<dbReference type="STRING" id="405948.SACE_1439"/>
<dbReference type="KEGG" id="sen:SACE_1439"/>
<dbReference type="eggNOG" id="COG0268">
    <property type="taxonomic scope" value="Bacteria"/>
</dbReference>
<dbReference type="HOGENOM" id="CLU_160655_0_1_11"/>
<dbReference type="OrthoDB" id="9807974at2"/>
<dbReference type="Proteomes" id="UP000006728">
    <property type="component" value="Chromosome"/>
</dbReference>
<dbReference type="GO" id="GO:0005829">
    <property type="term" value="C:cytosol"/>
    <property type="evidence" value="ECO:0007669"/>
    <property type="project" value="TreeGrafter"/>
</dbReference>
<dbReference type="GO" id="GO:0015935">
    <property type="term" value="C:small ribosomal subunit"/>
    <property type="evidence" value="ECO:0007669"/>
    <property type="project" value="TreeGrafter"/>
</dbReference>
<dbReference type="GO" id="GO:0070181">
    <property type="term" value="F:small ribosomal subunit rRNA binding"/>
    <property type="evidence" value="ECO:0007669"/>
    <property type="project" value="TreeGrafter"/>
</dbReference>
<dbReference type="GO" id="GO:0003735">
    <property type="term" value="F:structural constituent of ribosome"/>
    <property type="evidence" value="ECO:0007669"/>
    <property type="project" value="InterPro"/>
</dbReference>
<dbReference type="GO" id="GO:0006412">
    <property type="term" value="P:translation"/>
    <property type="evidence" value="ECO:0007669"/>
    <property type="project" value="UniProtKB-UniRule"/>
</dbReference>
<dbReference type="FunFam" id="1.20.58.110:FF:000001">
    <property type="entry name" value="30S ribosomal protein S20"/>
    <property type="match status" value="1"/>
</dbReference>
<dbReference type="Gene3D" id="1.20.58.110">
    <property type="entry name" value="Ribosomal protein S20"/>
    <property type="match status" value="1"/>
</dbReference>
<dbReference type="HAMAP" id="MF_00500">
    <property type="entry name" value="Ribosomal_bS20"/>
    <property type="match status" value="1"/>
</dbReference>
<dbReference type="InterPro" id="IPR002583">
    <property type="entry name" value="Ribosomal_bS20"/>
</dbReference>
<dbReference type="InterPro" id="IPR036510">
    <property type="entry name" value="Ribosomal_bS20_sf"/>
</dbReference>
<dbReference type="NCBIfam" id="TIGR00029">
    <property type="entry name" value="S20"/>
    <property type="match status" value="1"/>
</dbReference>
<dbReference type="PANTHER" id="PTHR33398">
    <property type="entry name" value="30S RIBOSOMAL PROTEIN S20"/>
    <property type="match status" value="1"/>
</dbReference>
<dbReference type="PANTHER" id="PTHR33398:SF1">
    <property type="entry name" value="SMALL RIBOSOMAL SUBUNIT PROTEIN BS20C"/>
    <property type="match status" value="1"/>
</dbReference>
<dbReference type="Pfam" id="PF01649">
    <property type="entry name" value="Ribosomal_S20p"/>
    <property type="match status" value="1"/>
</dbReference>
<dbReference type="SUPFAM" id="SSF46992">
    <property type="entry name" value="Ribosomal protein S20"/>
    <property type="match status" value="1"/>
</dbReference>
<evidence type="ECO:0000255" key="1">
    <source>
        <dbReference type="HAMAP-Rule" id="MF_00500"/>
    </source>
</evidence>
<evidence type="ECO:0000256" key="2">
    <source>
        <dbReference type="SAM" id="MobiDB-lite"/>
    </source>
</evidence>
<evidence type="ECO:0000305" key="3"/>
<protein>
    <recommendedName>
        <fullName evidence="1">Small ribosomal subunit protein bS20</fullName>
    </recommendedName>
    <alternativeName>
        <fullName evidence="3">30S ribosomal protein S20</fullName>
    </alternativeName>
</protein>
<accession>A4F9N6</accession>
<gene>
    <name evidence="1" type="primary">rpsT</name>
    <name type="ordered locus">SACE_1439</name>
</gene>
<name>RS20_SACEN</name>
<organism>
    <name type="scientific">Saccharopolyspora erythraea (strain ATCC 11635 / DSM 40517 / JCM 4748 / NBRC 13426 / NCIMB 8594 / NRRL 2338)</name>
    <dbReference type="NCBI Taxonomy" id="405948"/>
    <lineage>
        <taxon>Bacteria</taxon>
        <taxon>Bacillati</taxon>
        <taxon>Actinomycetota</taxon>
        <taxon>Actinomycetes</taxon>
        <taxon>Pseudonocardiales</taxon>
        <taxon>Pseudonocardiaceae</taxon>
        <taxon>Saccharopolyspora</taxon>
    </lineage>
</organism>
<reference key="1">
    <citation type="journal article" date="2007" name="Nat. Biotechnol.">
        <title>Complete genome sequence of the erythromycin-producing bacterium Saccharopolyspora erythraea NRRL23338.</title>
        <authorList>
            <person name="Oliynyk M."/>
            <person name="Samborskyy M."/>
            <person name="Lester J.B."/>
            <person name="Mironenko T."/>
            <person name="Scott N."/>
            <person name="Dickens S."/>
            <person name="Haydock S.F."/>
            <person name="Leadlay P.F."/>
        </authorList>
    </citation>
    <scope>NUCLEOTIDE SEQUENCE [LARGE SCALE GENOMIC DNA]</scope>
    <source>
        <strain>ATCC 11635 / DSM 40517 / JCM 4748 / NBRC 13426 / NCIMB 8594 / NRRL 2338</strain>
    </source>
</reference>
<comment type="function">
    <text evidence="1">Binds directly to 16S ribosomal RNA.</text>
</comment>
<comment type="similarity">
    <text evidence="1">Belongs to the bacterial ribosomal protein bS20 family.</text>
</comment>
<proteinExistence type="inferred from homology"/>
<sequence length="86" mass="9334">MANIKSQMKRIKTNEANRQRNKAVKSSLKTAIRKFREAADAGDKAKAVELQATAGRALDKAVSKGVIHSNQAANKKSAMAKRANQL</sequence>